<comment type="function">
    <text evidence="1">Involved in DNA repair and RecF pathway recombination.</text>
</comment>
<comment type="similarity">
    <text evidence="2">Belongs to the RecO family.</text>
</comment>
<feature type="chain" id="PRO_0000205029" description="DNA repair protein RecO">
    <location>
        <begin position="1"/>
        <end position="243"/>
    </location>
</feature>
<proteinExistence type="inferred from homology"/>
<evidence type="ECO:0000250" key="1"/>
<evidence type="ECO:0000305" key="2"/>
<dbReference type="EMBL" id="AE003849">
    <property type="protein sequence ID" value="AAF85047.1"/>
    <property type="molecule type" value="Genomic_DNA"/>
</dbReference>
<dbReference type="PIR" id="H82581">
    <property type="entry name" value="H82581"/>
</dbReference>
<dbReference type="RefSeq" id="WP_010894696.1">
    <property type="nucleotide sequence ID" value="NC_002488.3"/>
</dbReference>
<dbReference type="SMR" id="Q9PB96"/>
<dbReference type="STRING" id="160492.XF_2248"/>
<dbReference type="KEGG" id="xfa:XF_2248"/>
<dbReference type="PATRIC" id="fig|160492.11.peg.2393"/>
<dbReference type="eggNOG" id="COG1381">
    <property type="taxonomic scope" value="Bacteria"/>
</dbReference>
<dbReference type="HOGENOM" id="CLU_066645_1_0_6"/>
<dbReference type="Proteomes" id="UP000000812">
    <property type="component" value="Chromosome"/>
</dbReference>
<dbReference type="GO" id="GO:0043590">
    <property type="term" value="C:bacterial nucleoid"/>
    <property type="evidence" value="ECO:0007669"/>
    <property type="project" value="TreeGrafter"/>
</dbReference>
<dbReference type="GO" id="GO:0006310">
    <property type="term" value="P:DNA recombination"/>
    <property type="evidence" value="ECO:0007669"/>
    <property type="project" value="UniProtKB-UniRule"/>
</dbReference>
<dbReference type="GO" id="GO:0006302">
    <property type="term" value="P:double-strand break repair"/>
    <property type="evidence" value="ECO:0007669"/>
    <property type="project" value="TreeGrafter"/>
</dbReference>
<dbReference type="Gene3D" id="2.40.50.140">
    <property type="entry name" value="Nucleic acid-binding proteins"/>
    <property type="match status" value="1"/>
</dbReference>
<dbReference type="Gene3D" id="1.20.1440.120">
    <property type="entry name" value="Recombination protein O, C-terminal domain"/>
    <property type="match status" value="1"/>
</dbReference>
<dbReference type="HAMAP" id="MF_00201">
    <property type="entry name" value="RecO"/>
    <property type="match status" value="1"/>
</dbReference>
<dbReference type="InterPro" id="IPR022572">
    <property type="entry name" value="DNA_rep/recomb_RecO_N"/>
</dbReference>
<dbReference type="InterPro" id="IPR012340">
    <property type="entry name" value="NA-bd_OB-fold"/>
</dbReference>
<dbReference type="InterPro" id="IPR003717">
    <property type="entry name" value="RecO"/>
</dbReference>
<dbReference type="InterPro" id="IPR042242">
    <property type="entry name" value="RecO_C"/>
</dbReference>
<dbReference type="NCBIfam" id="TIGR00613">
    <property type="entry name" value="reco"/>
    <property type="match status" value="1"/>
</dbReference>
<dbReference type="PANTHER" id="PTHR33991">
    <property type="entry name" value="DNA REPAIR PROTEIN RECO"/>
    <property type="match status" value="1"/>
</dbReference>
<dbReference type="PANTHER" id="PTHR33991:SF1">
    <property type="entry name" value="DNA REPAIR PROTEIN RECO"/>
    <property type="match status" value="1"/>
</dbReference>
<dbReference type="Pfam" id="PF02565">
    <property type="entry name" value="RecO_C"/>
    <property type="match status" value="1"/>
</dbReference>
<dbReference type="Pfam" id="PF11967">
    <property type="entry name" value="RecO_N"/>
    <property type="match status" value="1"/>
</dbReference>
<dbReference type="SUPFAM" id="SSF50249">
    <property type="entry name" value="Nucleic acid-binding proteins"/>
    <property type="match status" value="1"/>
</dbReference>
<reference key="1">
    <citation type="journal article" date="2000" name="Nature">
        <title>The genome sequence of the plant pathogen Xylella fastidiosa.</title>
        <authorList>
            <person name="Simpson A.J.G."/>
            <person name="Reinach F.C."/>
            <person name="Arruda P."/>
            <person name="Abreu F.A."/>
            <person name="Acencio M."/>
            <person name="Alvarenga R."/>
            <person name="Alves L.M.C."/>
            <person name="Araya J.E."/>
            <person name="Baia G.S."/>
            <person name="Baptista C.S."/>
            <person name="Barros M.H."/>
            <person name="Bonaccorsi E.D."/>
            <person name="Bordin S."/>
            <person name="Bove J.M."/>
            <person name="Briones M.R.S."/>
            <person name="Bueno M.R.P."/>
            <person name="Camargo A.A."/>
            <person name="Camargo L.E.A."/>
            <person name="Carraro D.M."/>
            <person name="Carrer H."/>
            <person name="Colauto N.B."/>
            <person name="Colombo C."/>
            <person name="Costa F.F."/>
            <person name="Costa M.C.R."/>
            <person name="Costa-Neto C.M."/>
            <person name="Coutinho L.L."/>
            <person name="Cristofani M."/>
            <person name="Dias-Neto E."/>
            <person name="Docena C."/>
            <person name="El-Dorry H."/>
            <person name="Facincani A.P."/>
            <person name="Ferreira A.J.S."/>
            <person name="Ferreira V.C.A."/>
            <person name="Ferro J.A."/>
            <person name="Fraga J.S."/>
            <person name="Franca S.C."/>
            <person name="Franco M.C."/>
            <person name="Frohme M."/>
            <person name="Furlan L.R."/>
            <person name="Garnier M."/>
            <person name="Goldman G.H."/>
            <person name="Goldman M.H.S."/>
            <person name="Gomes S.L."/>
            <person name="Gruber A."/>
            <person name="Ho P.L."/>
            <person name="Hoheisel J.D."/>
            <person name="Junqueira M.L."/>
            <person name="Kemper E.L."/>
            <person name="Kitajima J.P."/>
            <person name="Krieger J.E."/>
            <person name="Kuramae E.E."/>
            <person name="Laigret F."/>
            <person name="Lambais M.R."/>
            <person name="Leite L.C.C."/>
            <person name="Lemos E.G.M."/>
            <person name="Lemos M.V.F."/>
            <person name="Lopes S.A."/>
            <person name="Lopes C.R."/>
            <person name="Machado J.A."/>
            <person name="Machado M.A."/>
            <person name="Madeira A.M.B.N."/>
            <person name="Madeira H.M.F."/>
            <person name="Marino C.L."/>
            <person name="Marques M.V."/>
            <person name="Martins E.A.L."/>
            <person name="Martins E.M.F."/>
            <person name="Matsukuma A.Y."/>
            <person name="Menck C.F.M."/>
            <person name="Miracca E.C."/>
            <person name="Miyaki C.Y."/>
            <person name="Monteiro-Vitorello C.B."/>
            <person name="Moon D.H."/>
            <person name="Nagai M.A."/>
            <person name="Nascimento A.L.T.O."/>
            <person name="Netto L.E.S."/>
            <person name="Nhani A. Jr."/>
            <person name="Nobrega F.G."/>
            <person name="Nunes L.R."/>
            <person name="Oliveira M.A."/>
            <person name="de Oliveira M.C."/>
            <person name="de Oliveira R.C."/>
            <person name="Palmieri D.A."/>
            <person name="Paris A."/>
            <person name="Peixoto B.R."/>
            <person name="Pereira G.A.G."/>
            <person name="Pereira H.A. Jr."/>
            <person name="Pesquero J.B."/>
            <person name="Quaggio R.B."/>
            <person name="Roberto P.G."/>
            <person name="Rodrigues V."/>
            <person name="de Rosa A.J.M."/>
            <person name="de Rosa V.E. Jr."/>
            <person name="de Sa R.G."/>
            <person name="Santelli R.V."/>
            <person name="Sawasaki H.E."/>
            <person name="da Silva A.C.R."/>
            <person name="da Silva A.M."/>
            <person name="da Silva F.R."/>
            <person name="Silva W.A. Jr."/>
            <person name="da Silveira J.F."/>
            <person name="Silvestri M.L.Z."/>
            <person name="Siqueira W.J."/>
            <person name="de Souza A.A."/>
            <person name="de Souza A.P."/>
            <person name="Terenzi M.F."/>
            <person name="Truffi D."/>
            <person name="Tsai S.M."/>
            <person name="Tsuhako M.H."/>
            <person name="Vallada H."/>
            <person name="Van Sluys M.A."/>
            <person name="Verjovski-Almeida S."/>
            <person name="Vettore A.L."/>
            <person name="Zago M.A."/>
            <person name="Zatz M."/>
            <person name="Meidanis J."/>
            <person name="Setubal J.C."/>
        </authorList>
    </citation>
    <scope>NUCLEOTIDE SEQUENCE [LARGE SCALE GENOMIC DNA]</scope>
    <source>
        <strain>9a5c</strain>
    </source>
</reference>
<sequence length="243" mass="27517">MLIEHEVAFVLHVRPWRETSLLVEVLTQAYGRLGLIARGVQGLKKQTLRAALQPLQWIRFSAIQRGELGQLRQAEALDTAPRLKGEAMLASFYINELLLRLVPRHAPVNELYLAYSQTRERLRTSDSLAWSLRLFEREILETLGVGFNLECDANGTPLDPATRYVLDPLEGPRRLLSEHNNAKRRDTATGHVLLALARNQIPNTNDLAGLRRSMRAVLLHHLGGRGLKSWEMIAAFRHQDTSP</sequence>
<accession>Q9PB96</accession>
<organism>
    <name type="scientific">Xylella fastidiosa (strain 9a5c)</name>
    <dbReference type="NCBI Taxonomy" id="160492"/>
    <lineage>
        <taxon>Bacteria</taxon>
        <taxon>Pseudomonadati</taxon>
        <taxon>Pseudomonadota</taxon>
        <taxon>Gammaproteobacteria</taxon>
        <taxon>Lysobacterales</taxon>
        <taxon>Lysobacteraceae</taxon>
        <taxon>Xylella</taxon>
    </lineage>
</organism>
<name>RECO_XYLFA</name>
<keyword id="KW-0227">DNA damage</keyword>
<keyword id="KW-0233">DNA recombination</keyword>
<keyword id="KW-0234">DNA repair</keyword>
<gene>
    <name type="primary">recO</name>
    <name type="ordered locus">XF_2248</name>
</gene>
<protein>
    <recommendedName>
        <fullName>DNA repair protein RecO</fullName>
    </recommendedName>
    <alternativeName>
        <fullName>Recombination protein O</fullName>
    </alternativeName>
</protein>